<comment type="function">
    <text evidence="2 3">Involved in the regulation of cell migration (By similarity). May be involved in mediating the organization of the parallel fibers of granule cells during cerebellar development (By similarity).</text>
</comment>
<comment type="subunit">
    <text evidence="1">Homodimer.</text>
</comment>
<comment type="subcellular location">
    <subcellularLocation>
        <location evidence="9">Cell membrane</location>
        <topology evidence="9">Single-pass membrane protein</topology>
    </subcellularLocation>
    <subcellularLocation>
        <location evidence="3">Cell junction</location>
    </subcellularLocation>
    <subcellularLocation>
        <location evidence="2">Golgi apparatus</location>
        <location evidence="2">trans-Golgi network</location>
    </subcellularLocation>
    <text evidence="3">Localized at adhesion zippers (early state of adherens junctions) of keratinocytes.</text>
</comment>
<reference key="1">
    <citation type="journal article" date="2009" name="PLoS Biol.">
        <title>Lineage-specific biology revealed by a finished genome assembly of the mouse.</title>
        <authorList>
            <person name="Church D.M."/>
            <person name="Goodstadt L."/>
            <person name="Hillier L.W."/>
            <person name="Zody M.C."/>
            <person name="Goldstein S."/>
            <person name="She X."/>
            <person name="Bult C.J."/>
            <person name="Agarwala R."/>
            <person name="Cherry J.L."/>
            <person name="DiCuccio M."/>
            <person name="Hlavina W."/>
            <person name="Kapustin Y."/>
            <person name="Meric P."/>
            <person name="Maglott D."/>
            <person name="Birtle Z."/>
            <person name="Marques A.C."/>
            <person name="Graves T."/>
            <person name="Zhou S."/>
            <person name="Teague B."/>
            <person name="Potamousis K."/>
            <person name="Churas C."/>
            <person name="Place M."/>
            <person name="Herschleb J."/>
            <person name="Runnheim R."/>
            <person name="Forrest D."/>
            <person name="Amos-Landgraf J."/>
            <person name="Schwartz D.C."/>
            <person name="Cheng Z."/>
            <person name="Lindblad-Toh K."/>
            <person name="Eichler E.E."/>
            <person name="Ponting C.P."/>
        </authorList>
    </citation>
    <scope>NUCLEOTIDE SEQUENCE [LARGE SCALE GENOMIC DNA]</scope>
    <source>
        <strain>C57BL/6J</strain>
    </source>
</reference>
<reference key="2">
    <citation type="submission" date="2005-09" db="EMBL/GenBank/DDBJ databases">
        <authorList>
            <person name="Mural R.J."/>
            <person name="Adams M.D."/>
            <person name="Myers E.W."/>
            <person name="Smith H.O."/>
            <person name="Venter J.C."/>
        </authorList>
    </citation>
    <scope>NUCLEOTIDE SEQUENCE [LARGE SCALE GENOMIC DNA]</scope>
</reference>
<reference key="3">
    <citation type="journal article" date="2004" name="DNA Res.">
        <title>Prediction of the coding sequences of mouse homologues of KIAA gene: IV. The complete nucleotide sequences of 500 mouse KIAA-homologous cDNAs identified by screening of terminal sequences of cDNA clones randomly sampled from size-fractionated libraries.</title>
        <authorList>
            <person name="Okazaki N."/>
            <person name="Kikuno R."/>
            <person name="Ohara R."/>
            <person name="Inamoto S."/>
            <person name="Koseki H."/>
            <person name="Hiraoka S."/>
            <person name="Saga Y."/>
            <person name="Seino S."/>
            <person name="Nishimura M."/>
            <person name="Kaisho T."/>
            <person name="Hoshino K."/>
            <person name="Kitamura H."/>
            <person name="Nagase T."/>
            <person name="Ohara O."/>
            <person name="Koga H."/>
        </authorList>
    </citation>
    <scope>NUCLEOTIDE SEQUENCE [MRNA] OF 2698-4351</scope>
    <source>
        <tissue>Brain</tissue>
    </source>
</reference>
<reference key="4">
    <citation type="journal article" date="2005" name="Science">
        <title>The transcriptional landscape of the mammalian genome.</title>
        <authorList>
            <person name="Carninci P."/>
            <person name="Kasukawa T."/>
            <person name="Katayama S."/>
            <person name="Gough J."/>
            <person name="Frith M.C."/>
            <person name="Maeda N."/>
            <person name="Oyama R."/>
            <person name="Ravasi T."/>
            <person name="Lenhard B."/>
            <person name="Wells C."/>
            <person name="Kodzius R."/>
            <person name="Shimokawa K."/>
            <person name="Bajic V.B."/>
            <person name="Brenner S.E."/>
            <person name="Batalov S."/>
            <person name="Forrest A.R."/>
            <person name="Zavolan M."/>
            <person name="Davis M.J."/>
            <person name="Wilming L.G."/>
            <person name="Aidinis V."/>
            <person name="Allen J.E."/>
            <person name="Ambesi-Impiombato A."/>
            <person name="Apweiler R."/>
            <person name="Aturaliya R.N."/>
            <person name="Bailey T.L."/>
            <person name="Bansal M."/>
            <person name="Baxter L."/>
            <person name="Beisel K.W."/>
            <person name="Bersano T."/>
            <person name="Bono H."/>
            <person name="Chalk A.M."/>
            <person name="Chiu K.P."/>
            <person name="Choudhary V."/>
            <person name="Christoffels A."/>
            <person name="Clutterbuck D.R."/>
            <person name="Crowe M.L."/>
            <person name="Dalla E."/>
            <person name="Dalrymple B.P."/>
            <person name="de Bono B."/>
            <person name="Della Gatta G."/>
            <person name="di Bernardo D."/>
            <person name="Down T."/>
            <person name="Engstrom P."/>
            <person name="Fagiolini M."/>
            <person name="Faulkner G."/>
            <person name="Fletcher C.F."/>
            <person name="Fukushima T."/>
            <person name="Furuno M."/>
            <person name="Futaki S."/>
            <person name="Gariboldi M."/>
            <person name="Georgii-Hemming P."/>
            <person name="Gingeras T.R."/>
            <person name="Gojobori T."/>
            <person name="Green R.E."/>
            <person name="Gustincich S."/>
            <person name="Harbers M."/>
            <person name="Hayashi Y."/>
            <person name="Hensch T.K."/>
            <person name="Hirokawa N."/>
            <person name="Hill D."/>
            <person name="Huminiecki L."/>
            <person name="Iacono M."/>
            <person name="Ikeo K."/>
            <person name="Iwama A."/>
            <person name="Ishikawa T."/>
            <person name="Jakt M."/>
            <person name="Kanapin A."/>
            <person name="Katoh M."/>
            <person name="Kawasawa Y."/>
            <person name="Kelso J."/>
            <person name="Kitamura H."/>
            <person name="Kitano H."/>
            <person name="Kollias G."/>
            <person name="Krishnan S.P."/>
            <person name="Kruger A."/>
            <person name="Kummerfeld S.K."/>
            <person name="Kurochkin I.V."/>
            <person name="Lareau L.F."/>
            <person name="Lazarevic D."/>
            <person name="Lipovich L."/>
            <person name="Liu J."/>
            <person name="Liuni S."/>
            <person name="McWilliam S."/>
            <person name="Madan Babu M."/>
            <person name="Madera M."/>
            <person name="Marchionni L."/>
            <person name="Matsuda H."/>
            <person name="Matsuzawa S."/>
            <person name="Miki H."/>
            <person name="Mignone F."/>
            <person name="Miyake S."/>
            <person name="Morris K."/>
            <person name="Mottagui-Tabar S."/>
            <person name="Mulder N."/>
            <person name="Nakano N."/>
            <person name="Nakauchi H."/>
            <person name="Ng P."/>
            <person name="Nilsson R."/>
            <person name="Nishiguchi S."/>
            <person name="Nishikawa S."/>
            <person name="Nori F."/>
            <person name="Ohara O."/>
            <person name="Okazaki Y."/>
            <person name="Orlando V."/>
            <person name="Pang K.C."/>
            <person name="Pavan W.J."/>
            <person name="Pavesi G."/>
            <person name="Pesole G."/>
            <person name="Petrovsky N."/>
            <person name="Piazza S."/>
            <person name="Reed J."/>
            <person name="Reid J.F."/>
            <person name="Ring B.Z."/>
            <person name="Ringwald M."/>
            <person name="Rost B."/>
            <person name="Ruan Y."/>
            <person name="Salzberg S.L."/>
            <person name="Sandelin A."/>
            <person name="Schneider C."/>
            <person name="Schoenbach C."/>
            <person name="Sekiguchi K."/>
            <person name="Semple C.A."/>
            <person name="Seno S."/>
            <person name="Sessa L."/>
            <person name="Sheng Y."/>
            <person name="Shibata Y."/>
            <person name="Shimada H."/>
            <person name="Shimada K."/>
            <person name="Silva D."/>
            <person name="Sinclair B."/>
            <person name="Sperling S."/>
            <person name="Stupka E."/>
            <person name="Sugiura K."/>
            <person name="Sultana R."/>
            <person name="Takenaka Y."/>
            <person name="Taki K."/>
            <person name="Tammoja K."/>
            <person name="Tan S.L."/>
            <person name="Tang S."/>
            <person name="Taylor M.S."/>
            <person name="Tegner J."/>
            <person name="Teichmann S.A."/>
            <person name="Ueda H.R."/>
            <person name="van Nimwegen E."/>
            <person name="Verardo R."/>
            <person name="Wei C.L."/>
            <person name="Yagi K."/>
            <person name="Yamanishi H."/>
            <person name="Zabarovsky E."/>
            <person name="Zhu S."/>
            <person name="Zimmer A."/>
            <person name="Hide W."/>
            <person name="Bult C."/>
            <person name="Grimmond S.M."/>
            <person name="Teasdale R.D."/>
            <person name="Liu E.T."/>
            <person name="Brusic V."/>
            <person name="Quackenbush J."/>
            <person name="Wahlestedt C."/>
            <person name="Mattick J.S."/>
            <person name="Hume D.A."/>
            <person name="Kai C."/>
            <person name="Sasaki D."/>
            <person name="Tomaru Y."/>
            <person name="Fukuda S."/>
            <person name="Kanamori-Katayama M."/>
            <person name="Suzuki M."/>
            <person name="Aoki J."/>
            <person name="Arakawa T."/>
            <person name="Iida J."/>
            <person name="Imamura K."/>
            <person name="Itoh M."/>
            <person name="Kato T."/>
            <person name="Kawaji H."/>
            <person name="Kawagashira N."/>
            <person name="Kawashima T."/>
            <person name="Kojima M."/>
            <person name="Kondo S."/>
            <person name="Konno H."/>
            <person name="Nakano K."/>
            <person name="Ninomiya N."/>
            <person name="Nishio T."/>
            <person name="Okada M."/>
            <person name="Plessy C."/>
            <person name="Shibata K."/>
            <person name="Shiraki T."/>
            <person name="Suzuki S."/>
            <person name="Tagami M."/>
            <person name="Waki K."/>
            <person name="Watahiki A."/>
            <person name="Okamura-Oho Y."/>
            <person name="Suzuki H."/>
            <person name="Kawai J."/>
            <person name="Hayashizaki Y."/>
        </authorList>
    </citation>
    <scope>NUCLEOTIDE SEQUENCE [LARGE SCALE MRNA] OF 3590-4351</scope>
    <source>
        <strain>C57BL/6J</strain>
        <tissue>Skin</tissue>
    </source>
</reference>
<reference key="5">
    <citation type="journal article" date="2010" name="Cell">
        <title>A tissue-specific atlas of mouse protein phosphorylation and expression.</title>
        <authorList>
            <person name="Huttlin E.L."/>
            <person name="Jedrychowski M.P."/>
            <person name="Elias J.E."/>
            <person name="Goswami T."/>
            <person name="Rad R."/>
            <person name="Beausoleil S.A."/>
            <person name="Villen J."/>
            <person name="Haas W."/>
            <person name="Sowa M.E."/>
            <person name="Gygi S.P."/>
        </authorList>
    </citation>
    <scope>IDENTIFICATION BY MASS SPECTROMETRY [LARGE SCALE ANALYSIS]</scope>
    <source>
        <tissue>Brain</tissue>
    </source>
</reference>
<gene>
    <name type="primary">Fat2</name>
    <name type="synonym">Fath2</name>
    <name type="synonym">Kiaa0811</name>
</gene>
<keyword id="KW-0106">Calcium</keyword>
<keyword id="KW-0130">Cell adhesion</keyword>
<keyword id="KW-0965">Cell junction</keyword>
<keyword id="KW-1003">Cell membrane</keyword>
<keyword id="KW-1015">Disulfide bond</keyword>
<keyword id="KW-0245">EGF-like domain</keyword>
<keyword id="KW-0325">Glycoprotein</keyword>
<keyword id="KW-0333">Golgi apparatus</keyword>
<keyword id="KW-0472">Membrane</keyword>
<keyword id="KW-1185">Reference proteome</keyword>
<keyword id="KW-0677">Repeat</keyword>
<keyword id="KW-0732">Signal</keyword>
<keyword id="KW-0812">Transmembrane</keyword>
<keyword id="KW-1133">Transmembrane helix</keyword>
<proteinExistence type="evidence at protein level"/>
<organism>
    <name type="scientific">Mus musculus</name>
    <name type="common">Mouse</name>
    <dbReference type="NCBI Taxonomy" id="10090"/>
    <lineage>
        <taxon>Eukaryota</taxon>
        <taxon>Metazoa</taxon>
        <taxon>Chordata</taxon>
        <taxon>Craniata</taxon>
        <taxon>Vertebrata</taxon>
        <taxon>Euteleostomi</taxon>
        <taxon>Mammalia</taxon>
        <taxon>Eutheria</taxon>
        <taxon>Euarchontoglires</taxon>
        <taxon>Glires</taxon>
        <taxon>Rodentia</taxon>
        <taxon>Myomorpha</taxon>
        <taxon>Muroidea</taxon>
        <taxon>Muridae</taxon>
        <taxon>Murinae</taxon>
        <taxon>Mus</taxon>
        <taxon>Mus</taxon>
    </lineage>
</organism>
<dbReference type="EMBL" id="AL713870">
    <property type="status" value="NOT_ANNOTATED_CDS"/>
    <property type="molecule type" value="Genomic_DNA"/>
</dbReference>
<dbReference type="EMBL" id="CH466575">
    <property type="protein sequence ID" value="EDL33495.1"/>
    <property type="molecule type" value="Genomic_DNA"/>
</dbReference>
<dbReference type="EMBL" id="AK173031">
    <property type="protein sequence ID" value="BAD32309.1"/>
    <property type="molecule type" value="mRNA"/>
</dbReference>
<dbReference type="EMBL" id="AK132523">
    <property type="protein sequence ID" value="BAE21217.1"/>
    <property type="molecule type" value="mRNA"/>
</dbReference>
<dbReference type="CCDS" id="CCDS36157.1"/>
<dbReference type="RefSeq" id="NP_001025159.1">
    <property type="nucleotide sequence ID" value="NM_001029988.2"/>
</dbReference>
<dbReference type="RefSeq" id="XP_006533385.1">
    <property type="nucleotide sequence ID" value="XM_006533322.4"/>
</dbReference>
<dbReference type="RefSeq" id="XP_006533386.1">
    <property type="nucleotide sequence ID" value="XM_006533323.4"/>
</dbReference>
<dbReference type="RefSeq" id="XP_030101863.1">
    <property type="nucleotide sequence ID" value="XM_030246003.1"/>
</dbReference>
<dbReference type="SMR" id="Q5F226"/>
<dbReference type="BioGRID" id="232833">
    <property type="interactions" value="2"/>
</dbReference>
<dbReference type="FunCoup" id="Q5F226">
    <property type="interactions" value="50"/>
</dbReference>
<dbReference type="IntAct" id="Q5F226">
    <property type="interactions" value="1"/>
</dbReference>
<dbReference type="STRING" id="10090.ENSMUSP00000067556"/>
<dbReference type="GlyConnect" id="2654">
    <property type="glycosylation" value="3 N-Linked glycans (3 sites)"/>
</dbReference>
<dbReference type="GlyCosmos" id="Q5F226">
    <property type="glycosylation" value="37 sites, 3 glycans"/>
</dbReference>
<dbReference type="GlyGen" id="Q5F226">
    <property type="glycosylation" value="40 sites, 15 N-linked glycans (23 sites), 1 O-linked glycan (1 site)"/>
</dbReference>
<dbReference type="iPTMnet" id="Q5F226"/>
<dbReference type="PhosphoSitePlus" id="Q5F226"/>
<dbReference type="SwissPalm" id="Q5F226"/>
<dbReference type="PaxDb" id="10090-ENSMUSP00000067556"/>
<dbReference type="PeptideAtlas" id="Q5F226"/>
<dbReference type="ProteomicsDB" id="267341"/>
<dbReference type="Antibodypedia" id="77918">
    <property type="antibodies" value="115 antibodies from 13 providers"/>
</dbReference>
<dbReference type="DNASU" id="245827"/>
<dbReference type="Ensembl" id="ENSMUST00000068853.13">
    <property type="protein sequence ID" value="ENSMUSP00000067556.7"/>
    <property type="gene ID" value="ENSMUSG00000055333.15"/>
</dbReference>
<dbReference type="Ensembl" id="ENSMUST00000108864.2">
    <property type="protein sequence ID" value="ENSMUSP00000104492.2"/>
    <property type="gene ID" value="ENSMUSG00000055333.15"/>
</dbReference>
<dbReference type="GeneID" id="245827"/>
<dbReference type="KEGG" id="mmu:245827"/>
<dbReference type="UCSC" id="uc007izf.1">
    <property type="organism name" value="mouse"/>
</dbReference>
<dbReference type="AGR" id="MGI:2685369"/>
<dbReference type="CTD" id="2196"/>
<dbReference type="MGI" id="MGI:2685369">
    <property type="gene designation" value="Fat2"/>
</dbReference>
<dbReference type="VEuPathDB" id="HostDB:ENSMUSG00000055333"/>
<dbReference type="eggNOG" id="KOG1219">
    <property type="taxonomic scope" value="Eukaryota"/>
</dbReference>
<dbReference type="GeneTree" id="ENSGT00940000158507"/>
<dbReference type="HOGENOM" id="CLU_000042_2_0_1"/>
<dbReference type="InParanoid" id="Q5F226"/>
<dbReference type="OMA" id="QRRENCT"/>
<dbReference type="OrthoDB" id="6252479at2759"/>
<dbReference type="PhylomeDB" id="Q5F226"/>
<dbReference type="TreeFam" id="TF316403"/>
<dbReference type="BioGRID-ORCS" id="245827">
    <property type="hits" value="2 hits in 79 CRISPR screens"/>
</dbReference>
<dbReference type="PRO" id="PR:Q5F226"/>
<dbReference type="Proteomes" id="UP000000589">
    <property type="component" value="Chromosome 11"/>
</dbReference>
<dbReference type="RNAct" id="Q5F226">
    <property type="molecule type" value="protein"/>
</dbReference>
<dbReference type="Bgee" id="ENSMUSG00000055333">
    <property type="expression patterns" value="Expressed in cerebellum and 72 other cell types or tissues"/>
</dbReference>
<dbReference type="GO" id="GO:0005912">
    <property type="term" value="C:adherens junction"/>
    <property type="evidence" value="ECO:0000250"/>
    <property type="project" value="UniProtKB"/>
</dbReference>
<dbReference type="GO" id="GO:0005794">
    <property type="term" value="C:Golgi apparatus"/>
    <property type="evidence" value="ECO:0007669"/>
    <property type="project" value="UniProtKB-SubCell"/>
</dbReference>
<dbReference type="GO" id="GO:0005886">
    <property type="term" value="C:plasma membrane"/>
    <property type="evidence" value="ECO:0007669"/>
    <property type="project" value="UniProtKB-SubCell"/>
</dbReference>
<dbReference type="GO" id="GO:0005509">
    <property type="term" value="F:calcium ion binding"/>
    <property type="evidence" value="ECO:0007669"/>
    <property type="project" value="InterPro"/>
</dbReference>
<dbReference type="GO" id="GO:0031589">
    <property type="term" value="P:cell-substrate adhesion"/>
    <property type="evidence" value="ECO:0000250"/>
    <property type="project" value="UniProtKB"/>
</dbReference>
<dbReference type="GO" id="GO:0010631">
    <property type="term" value="P:epithelial cell migration"/>
    <property type="evidence" value="ECO:0000250"/>
    <property type="project" value="UniProtKB"/>
</dbReference>
<dbReference type="GO" id="GO:0007156">
    <property type="term" value="P:homophilic cell adhesion via plasma membrane adhesion molecules"/>
    <property type="evidence" value="ECO:0000250"/>
    <property type="project" value="UniProtKB"/>
</dbReference>
<dbReference type="CDD" id="cd11304">
    <property type="entry name" value="Cadherin_repeat"/>
    <property type="match status" value="32"/>
</dbReference>
<dbReference type="CDD" id="cd00054">
    <property type="entry name" value="EGF_CA"/>
    <property type="match status" value="2"/>
</dbReference>
<dbReference type="CDD" id="cd00110">
    <property type="entry name" value="LamG"/>
    <property type="match status" value="1"/>
</dbReference>
<dbReference type="FunFam" id="2.60.40.60:FF:000116">
    <property type="entry name" value="Dachsous cadherin-related 2"/>
    <property type="match status" value="1"/>
</dbReference>
<dbReference type="FunFam" id="2.60.40.60:FF:000015">
    <property type="entry name" value="FAT atypical cadherin 1"/>
    <property type="match status" value="1"/>
</dbReference>
<dbReference type="FunFam" id="2.60.40.60:FF:000021">
    <property type="entry name" value="FAT atypical cadherin 1"/>
    <property type="match status" value="2"/>
</dbReference>
<dbReference type="FunFam" id="2.60.40.60:FF:000026">
    <property type="entry name" value="FAT atypical cadherin 1"/>
    <property type="match status" value="2"/>
</dbReference>
<dbReference type="FunFam" id="2.60.40.60:FF:000032">
    <property type="entry name" value="FAT atypical cadherin 1"/>
    <property type="match status" value="1"/>
</dbReference>
<dbReference type="FunFam" id="2.60.40.60:FF:000033">
    <property type="entry name" value="FAT atypical cadherin 1"/>
    <property type="match status" value="1"/>
</dbReference>
<dbReference type="FunFam" id="2.60.40.60:FF:000037">
    <property type="entry name" value="FAT atypical cadherin 1"/>
    <property type="match status" value="2"/>
</dbReference>
<dbReference type="FunFam" id="2.60.40.60:FF:000041">
    <property type="entry name" value="FAT atypical cadherin 1"/>
    <property type="match status" value="1"/>
</dbReference>
<dbReference type="FunFam" id="2.60.40.60:FF:000051">
    <property type="entry name" value="FAT atypical cadherin 1"/>
    <property type="match status" value="1"/>
</dbReference>
<dbReference type="FunFam" id="2.60.40.60:FF:000065">
    <property type="entry name" value="FAT atypical cadherin 1"/>
    <property type="match status" value="1"/>
</dbReference>
<dbReference type="FunFam" id="2.60.40.60:FF:000066">
    <property type="entry name" value="FAT atypical cadherin 1"/>
    <property type="match status" value="1"/>
</dbReference>
<dbReference type="FunFam" id="2.60.40.60:FF:000071">
    <property type="entry name" value="FAT atypical cadherin 1"/>
    <property type="match status" value="1"/>
</dbReference>
<dbReference type="FunFam" id="2.60.40.60:FF:000075">
    <property type="entry name" value="FAT atypical cadherin 1"/>
    <property type="match status" value="1"/>
</dbReference>
<dbReference type="FunFam" id="2.60.40.60:FF:000079">
    <property type="entry name" value="FAT atypical cadherin 1"/>
    <property type="match status" value="1"/>
</dbReference>
<dbReference type="FunFam" id="2.60.40.60:FF:000080">
    <property type="entry name" value="FAT atypical cadherin 1"/>
    <property type="match status" value="1"/>
</dbReference>
<dbReference type="FunFam" id="2.60.40.60:FF:000089">
    <property type="entry name" value="FAT atypical cadherin 1"/>
    <property type="match status" value="1"/>
</dbReference>
<dbReference type="FunFam" id="2.60.120.200:FF:000139">
    <property type="entry name" value="FAT atypical cadherin 2"/>
    <property type="match status" value="1"/>
</dbReference>
<dbReference type="FunFam" id="2.60.40.60:FF:000186">
    <property type="entry name" value="FAT atypical cadherin 2"/>
    <property type="match status" value="1"/>
</dbReference>
<dbReference type="FunFam" id="2.60.40.60:FF:000194">
    <property type="entry name" value="FAT atypical cadherin 2"/>
    <property type="match status" value="1"/>
</dbReference>
<dbReference type="FunFam" id="2.60.40.60:FF:000197">
    <property type="entry name" value="FAT atypical cadherin 2"/>
    <property type="match status" value="1"/>
</dbReference>
<dbReference type="FunFam" id="2.60.40.60:FF:000207">
    <property type="entry name" value="FAT atypical cadherin 2"/>
    <property type="match status" value="1"/>
</dbReference>
<dbReference type="FunFam" id="2.60.40.60:FF:000215">
    <property type="entry name" value="FAT atypical cadherin 2"/>
    <property type="match status" value="1"/>
</dbReference>
<dbReference type="FunFam" id="2.60.40.60:FF:000024">
    <property type="entry name" value="FAT atypical cadherin 3"/>
    <property type="match status" value="1"/>
</dbReference>
<dbReference type="FunFam" id="2.60.40.60:FF:000039">
    <property type="entry name" value="FAT atypical cadherin 3"/>
    <property type="match status" value="1"/>
</dbReference>
<dbReference type="FunFam" id="2.60.40.60:FF:000053">
    <property type="entry name" value="FAT atypical cadherin 3"/>
    <property type="match status" value="1"/>
</dbReference>
<dbReference type="FunFam" id="2.60.40.60:FF:000058">
    <property type="entry name" value="FAT atypical cadherin 3"/>
    <property type="match status" value="1"/>
</dbReference>
<dbReference type="FunFam" id="2.60.40.60:FF:000059">
    <property type="entry name" value="FAT atypical cadherin 3"/>
    <property type="match status" value="1"/>
</dbReference>
<dbReference type="FunFam" id="2.60.40.60:FF:000061">
    <property type="entry name" value="FAT atypical cadherin 3"/>
    <property type="match status" value="1"/>
</dbReference>
<dbReference type="FunFam" id="2.10.25.10:FF:000057">
    <property type="entry name" value="protocadherin Fat 1 isoform X2"/>
    <property type="match status" value="2"/>
</dbReference>
<dbReference type="FunFam" id="2.60.40.60:FF:000178">
    <property type="entry name" value="Protocadherin Fat 2"/>
    <property type="match status" value="1"/>
</dbReference>
<dbReference type="FunFam" id="2.60.40.60:FF:000198">
    <property type="entry name" value="Protocadherin Fat 2"/>
    <property type="match status" value="1"/>
</dbReference>
<dbReference type="FunFam" id="2.60.40.60:FF:000035">
    <property type="entry name" value="Protocadherin Fat 3"/>
    <property type="match status" value="1"/>
</dbReference>
<dbReference type="Gene3D" id="2.60.120.200">
    <property type="match status" value="1"/>
</dbReference>
<dbReference type="Gene3D" id="2.60.40.60">
    <property type="entry name" value="Cadherins"/>
    <property type="match status" value="33"/>
</dbReference>
<dbReference type="Gene3D" id="2.10.25.10">
    <property type="entry name" value="Laminin"/>
    <property type="match status" value="2"/>
</dbReference>
<dbReference type="InterPro" id="IPR002126">
    <property type="entry name" value="Cadherin-like_dom"/>
</dbReference>
<dbReference type="InterPro" id="IPR015919">
    <property type="entry name" value="Cadherin-like_sf"/>
</dbReference>
<dbReference type="InterPro" id="IPR020894">
    <property type="entry name" value="Cadherin_CS"/>
</dbReference>
<dbReference type="InterPro" id="IPR013320">
    <property type="entry name" value="ConA-like_dom_sf"/>
</dbReference>
<dbReference type="InterPro" id="IPR001881">
    <property type="entry name" value="EGF-like_Ca-bd_dom"/>
</dbReference>
<dbReference type="InterPro" id="IPR000742">
    <property type="entry name" value="EGF-like_dom"/>
</dbReference>
<dbReference type="InterPro" id="IPR001791">
    <property type="entry name" value="Laminin_G"/>
</dbReference>
<dbReference type="InterPro" id="IPR050174">
    <property type="entry name" value="Protocadherin/Cadherin-CA"/>
</dbReference>
<dbReference type="PANTHER" id="PTHR24028">
    <property type="entry name" value="CADHERIN-87A"/>
    <property type="match status" value="1"/>
</dbReference>
<dbReference type="PANTHER" id="PTHR24028:SF347">
    <property type="entry name" value="PROTOCADHERIN FAT 1-LIKE ISOFORM X1"/>
    <property type="match status" value="1"/>
</dbReference>
<dbReference type="Pfam" id="PF00028">
    <property type="entry name" value="Cadherin"/>
    <property type="match status" value="28"/>
</dbReference>
<dbReference type="Pfam" id="PF00008">
    <property type="entry name" value="EGF"/>
    <property type="match status" value="2"/>
</dbReference>
<dbReference type="Pfam" id="PF02210">
    <property type="entry name" value="Laminin_G_2"/>
    <property type="match status" value="1"/>
</dbReference>
<dbReference type="PRINTS" id="PR00205">
    <property type="entry name" value="CADHERIN"/>
</dbReference>
<dbReference type="SMART" id="SM00112">
    <property type="entry name" value="CA"/>
    <property type="match status" value="33"/>
</dbReference>
<dbReference type="SMART" id="SM00181">
    <property type="entry name" value="EGF"/>
    <property type="match status" value="2"/>
</dbReference>
<dbReference type="SMART" id="SM00179">
    <property type="entry name" value="EGF_CA"/>
    <property type="match status" value="2"/>
</dbReference>
<dbReference type="SMART" id="SM00282">
    <property type="entry name" value="LamG"/>
    <property type="match status" value="1"/>
</dbReference>
<dbReference type="SUPFAM" id="SSF49313">
    <property type="entry name" value="Cadherin-like"/>
    <property type="match status" value="33"/>
</dbReference>
<dbReference type="SUPFAM" id="SSF49899">
    <property type="entry name" value="Concanavalin A-like lectins/glucanases"/>
    <property type="match status" value="1"/>
</dbReference>
<dbReference type="SUPFAM" id="SSF57196">
    <property type="entry name" value="EGF/Laminin"/>
    <property type="match status" value="2"/>
</dbReference>
<dbReference type="PROSITE" id="PS00232">
    <property type="entry name" value="CADHERIN_1"/>
    <property type="match status" value="13"/>
</dbReference>
<dbReference type="PROSITE" id="PS50268">
    <property type="entry name" value="CADHERIN_2"/>
    <property type="match status" value="32"/>
</dbReference>
<dbReference type="PROSITE" id="PS00022">
    <property type="entry name" value="EGF_1"/>
    <property type="match status" value="2"/>
</dbReference>
<dbReference type="PROSITE" id="PS01186">
    <property type="entry name" value="EGF_2"/>
    <property type="match status" value="1"/>
</dbReference>
<dbReference type="PROSITE" id="PS50026">
    <property type="entry name" value="EGF_3"/>
    <property type="match status" value="2"/>
</dbReference>
<dbReference type="PROSITE" id="PS50025">
    <property type="entry name" value="LAM_G_DOMAIN"/>
    <property type="match status" value="1"/>
</dbReference>
<sequence>MTLVLLGVAMVLLHRAACEKPLEETITPLTWRFTHSLYNATIYENSAPKTYVESPVKMGMYLAEPHWVVKYRIISGDAAGVFKTEEHVVGNFCFLRIRTKSSNTALLNREVRDSYTLVVQASDKSLEFEALTQVVVHILDQNDLKPLFSPPSYRFTISEDRPLKSPICKVTATDADLGQNAEFYYAFNARSEVFAIHPTSGVVTVAGKLNVTWRGKYELQVLAVDRMRKISEGNGFGNLAPLVIYVEPVHRKPPVITLVVLNPPEGDEGDIYATVTVDTNGSGAEVDSLEVVGGDPGKYFKVLKSYAQGNEFNLVAVRDINWAEHLHGFNISLQTHSRSRFPSRSIIRAFHLPPYTLANLRFEKAVYRVKLSEFSPPGSRVALVRVTTALPTLRYALKPSSGSTVFKLNARTGLITTTKPVDFHEQNQYQLHVKTSLGQATTTVIIDIVDCNNHAPVFNRSSYEGTLDENIPPGTSVLTVTATDQDHGDNGHITYSIAGPKAVPFSIDPYLGVISTTKSMDYELMKRIYTFRVRASDWGSPFRQEKEVSVSLRLKNLNDNQPMFEEVNCTVSLRQDAPVGKSIMAVSAIDMDELQNLKYEIVSGNEQDYFHLNHFSGVISLKRSFMNLTAVRPTVYSLKITASDGKNYASPTTLKVTVVKDPRSEVPVQCDKTGVLTHITKTILQSAGLQGQEMGEEDFTSLGNYQINHHAPQFEDHFPQSIDILEQVPVNTPLAHLAATDPDPGFHGRLVYVIADGNEEGCFDIELETGLLTVAAALDYETTSFYVLNVTVYDLGTPPKSSWKLLTVTVKDWNDKPPRFPPGGYQLTISEDTEVGTTVAELKTRDTDSEDNGRVRYTLLTPTEKFSLHPLTGELVVTGQLDRESEPQYILKAEARDQPTKGHQLFSVTDVIVTLEDINDNPPQCITEHSSLKVPEDMPLGTVLTFLDASDPDLGPAGEVKYILVDDVHGTFRVDPMTGALSLEKELDFERRAGYNLSFWASDSGRPLARRTLCHVEVLVMDVNENLHSPHFSSFVYQGQVQENSPAGTQVMVVTAQDDDSGLDGELQYFLRAGTGLEAFSINQDTGMLETLAPLDREFTPYYWLTVLAVDRGSVPLSAVTEVYIEVTDINDNIPSMSRPVFYPSVKEDAPLGTSVLQLEAWDPDFSSQGKLTFNLTSGNHMGHFIVHPFTGLLSTAKQLDRENKDEYVLEVTVQDNGDPPLRSTSRVVVCVLDVNDNSPMFSHKLFNVRLSERLSPLSPEPVYRLVASDPDEGLNGSITYSIEESDEESFRIDPVTGVVSSSSTFAAGEYNILTIKATDSGQPALSTSVRLHIEWIPQPRPSSIPLSFDESHYSFAVMETDPVNHMLGVISVEGRPGLFWFHISDGDKDMDFDIEKTTGSIVIARPLDTRRKSSYNLTVEVTDGFHTIATQVHILMIANINHHRPQFLQDHYDIRVPQDTLPGVELLRVQATDQDHGKGLIYTIHSSRDPGSANLFQLDPSSGVLVTVGTLDLHSGPSQHILTVMVRDQEMPIKRNFVWVTIHVEDGNLHSPHFTQPRYEANVPDTTTPGTELLQVRAVDADRGANAEVHYSFLKGNSEGFFNIDSLLGIITVAQRLDHVHLNRHALTVKAEDQGSPQRHDLAMVVVHVHPSDSSAPIFSKDEYFIEIPESVPIGSPILLISAASSSDVTYELREGNKNSVFSMNSYSGLISTQKRLDHEKVSSYQLKIRGSNMAGVFTEVVALVYIIDENDNAPAFLKSTFVGHISEAAPLHSLILGEDNSPLVIRASDSDQEANSLLVYKILEPEALKFFKIDPSMGTLTITSELDYETTPLFQFSIYVHDQGTPILFAPRSARVIIHVRDVNDSPPRFSEQIYEVAVVEPIHPGMELLTVQAEDNDSKVTYSIKTSNTDEAVTIHPITGQISVVNPAALRLFPKLNIRAFDGLYQDTAVVKISLTQALDKSLQFDQDIYRARVTENTPHSNVLVILGVHGNHLNDTLSYFLLNGTDLFHMVKSAGVLQTRGVTFDREQQDTHEVAVEVRDNRVPRRVAQALVRVSVEDVNDNIPEFQHLPYYTVIQDGTEPGDVLFQVSATDKDLGANGTVTYGFAEDYAYFRIDPYVGDISLKKPFDYQALNKYHLRVTARDAGTPPLQTEVEVHVTVRNKSNPLFQSPYYKVKVPENITLYTPILHTQARSPEGLRLIYNIVEEEPLMLFTTDFKTGVLTVTGPLDYESKNKHVFTVRATDTALGSFSEATVEVLVEDINDNPPTFSQLVYSTSVSEGSPAQTPVIQLLASDQDSGQNQDVSYQIVEDGSDVSKFFRINGSTGEMFTIQELDYEAHQHFRVKVRATDRGDPPLTGETLVVVNVSDINDNPPEFREPQYEANVSELATCGHLVLKVQALDPDIGDTSRLEYLILSGNQDRHFSINSTSGIISMFNLCKKQLDSSYNLRVGASDGVFQATVPVYINTTNANKYSPEFQQNVYEAELAENAKVGTKVIELLAIDKDSGPYGTVDYTIINKLAGERFFINPSGQITTLQKLDRENSTERVIAIKIMARDGGGKVAFCTVKIILTDENDNAPQFKASGYTVSIPSNVSRDSPIIQVLAYDADEGRNADVTYSVDSTEDLAEEIIEVNPTTGVVKVKESLVGLENKAVDFNIKAQDGGPPHWDSLVPVRLQVVPNEIPLPKFSEPLYTFSASEDLPEGSEIGSVKAVAAQDPIIYSLVQGTTPESNSDDVFSLDQDTGVLKVKKAMDHESTKWYQIDLMAHCPHEDTDLVSLVSVNIQVEDVNDNRPVFEADPYKAFLTENMPGGTTVIQVTANDQDTGSDGQVSYRLSVEPGSNIHQLFAVDSESGWITTLQELDCETQQTYRFYVVAFDHGQTIQLSSQALVEVSITDENDNPPRFASEDYRGSVVENNEPGELVATLKTLDADISEQNRQVTCYITEGDPLGQFSISQVGDEWRITSRKTLDREHIAKYLLRITASDGKFQASVPVEVFVLDINDNSPQCSQLLYTGKVREDVTPGHFILKVSAIDVDMDTNAQITYSLHGPGAQEFKLDPHTGELTTLSVLDRERKDVYNLVAKATDGGGQSCQAEVTLHIEDVNDNAPRFFPSHCAVAVFDNTTVKTPVAVVFARDPDQGVNAQVVYSLTDSADGQFSIDATSGVIRLEKPLQVRSSSAVELTVRASDLGTPIPLSTLGTVTVSIVGLEDYLPIFLNSEHSTQVPEDALIDMEVLYLATLTRPGSEKTGYHITGGNEQGKFRLDAHTGILYVNGSLDFETNPKYFLSIECSRKSSSSLSDVTTIVINVTDVNEHHPRFTHDLYTVRVLENAIVGDVILTVSASDDDGPVNSVITYSLVGGNQLGHFTIDPKKGKLQVAKALDWEQTPSYSLRIRATDSGQPPLHEDTEVAVEVVDVNDNPPRFFQLNYSTAVQENSPIGIKVLQLILDDPDSPQNGPPYFFRITEGNTGSVFRVTPDGWLVTAGSLSRRAQEWYQLHIEVSDSGLPPLSSSTLVRVHITEQSRYPPSTLPLEIFITKGEEEFQGGMVGKIHATDRDPQDTLTYSLDREGSLGKYFTVGASDGKIIASQGLPRGRYLFNVTVSDGTFTTTTGVHVHVWHMGQEAPQQAVWLGFHQLTPEELVSDHWRNLQRFLSNILDIKRANIHLASLQPAEVTAGVDVLLAFEGHSGTSYDLQELASAIAHSAKEMEHSVGIQMRSALPVVPCQGPSCQDQTCQETVSLEPRVGPSYSTARLSILTPRHHLGKNCSCNGTTWRFSGQSYMRYRPLEAQNWQIHFYLKTLQPWALLMFTNETASISLKLANGFLHLEYRCPGGFYGNLSSHRPVNDGQWHSMLLEERDTSVHLLVDITDNTSLVIPEECQGLRTERHLLLGGLVPSNPSSNVSLGFEGCLDAVVVNSERLELLGHRKKMAGYLETWALSQCCWPGTTCSQNPCLNGGSCSPALGSGYLCRCPPLFSGRNCELGRENCTSAPCQEGGTCVSSPEGTSCSCPHPYTGDRCEMEARGCSGGHCLITPEIKRGDWGQQEFLVIIVALPLLIIATVGLLLYCRRCKSHKPVAMEDPDLLARSIGVDTQASPAIELDPLNAGSCNDLNQLEPSKTSVPNELVTFGPSSKQRPMVCSVPPRLPPAVVSSHPGHEPIIKRTWSGEELVYPSGAAVWPPTYSRKEHWEYPHPEAMQGPLPPSPRRHVSPAVMPDPAGLYGGFPFPLELENKRAPLPPRYSNQNLEDLIPPRPPSPREHLLAPCLNEYTAISYYHSQFRQGGGGPCLAEGGYKGVSMRLSRAGPSYADCEVNGGPAPGRSQPRAPPNYEGSDMVESDYGSCEEVMF</sequence>
<evidence type="ECO:0000250" key="1"/>
<evidence type="ECO:0000250" key="2">
    <source>
        <dbReference type="UniProtKB" id="O88277"/>
    </source>
</evidence>
<evidence type="ECO:0000250" key="3">
    <source>
        <dbReference type="UniProtKB" id="Q9NYQ8"/>
    </source>
</evidence>
<evidence type="ECO:0000255" key="4"/>
<evidence type="ECO:0000255" key="5">
    <source>
        <dbReference type="PROSITE-ProRule" id="PRU00043"/>
    </source>
</evidence>
<evidence type="ECO:0000255" key="6">
    <source>
        <dbReference type="PROSITE-ProRule" id="PRU00076"/>
    </source>
</evidence>
<evidence type="ECO:0000255" key="7">
    <source>
        <dbReference type="PROSITE-ProRule" id="PRU00122"/>
    </source>
</evidence>
<evidence type="ECO:0000256" key="8">
    <source>
        <dbReference type="SAM" id="MobiDB-lite"/>
    </source>
</evidence>
<evidence type="ECO:0000305" key="9"/>
<accession>Q5F226</accession>
<accession>Q3V1D4</accession>
<accession>Q69ZY7</accession>
<name>FAT2_MOUSE</name>
<feature type="signal peptide" evidence="4">
    <location>
        <begin position="1"/>
        <end position="18"/>
    </location>
</feature>
<feature type="chain" id="PRO_0000406601" description="Protocadherin Fat 2">
    <location>
        <begin position="19"/>
        <end position="4351"/>
    </location>
</feature>
<feature type="topological domain" description="Extracellular" evidence="4">
    <location>
        <begin position="19"/>
        <end position="4050"/>
    </location>
</feature>
<feature type="transmembrane region" description="Helical" evidence="4">
    <location>
        <begin position="4051"/>
        <end position="4071"/>
    </location>
</feature>
<feature type="topological domain" description="Cytoplasmic" evidence="4">
    <location>
        <begin position="4072"/>
        <end position="4351"/>
    </location>
</feature>
<feature type="domain" description="Cadherin 1" evidence="5">
    <location>
        <begin position="34"/>
        <end position="148"/>
    </location>
</feature>
<feature type="domain" description="Cadherin 2" evidence="5">
    <location>
        <begin position="149"/>
        <end position="256"/>
    </location>
</feature>
<feature type="domain" description="Cadherin 3" evidence="5">
    <location>
        <begin position="363"/>
        <end position="458"/>
    </location>
</feature>
<feature type="domain" description="Cadherin 4" evidence="5">
    <location>
        <begin position="459"/>
        <end position="564"/>
    </location>
</feature>
<feature type="domain" description="Cadherin 5" evidence="5">
    <location>
        <begin position="565"/>
        <end position="669"/>
    </location>
</feature>
<feature type="domain" description="Cadherin 6" evidence="5">
    <location>
        <begin position="716"/>
        <end position="820"/>
    </location>
</feature>
<feature type="domain" description="Cadherin 7" evidence="5">
    <location>
        <begin position="821"/>
        <end position="925"/>
    </location>
</feature>
<feature type="domain" description="Cadherin 8" evidence="5">
    <location>
        <begin position="926"/>
        <end position="1032"/>
    </location>
</feature>
<feature type="domain" description="Cadherin 9" evidence="5">
    <location>
        <begin position="1033"/>
        <end position="1142"/>
    </location>
</feature>
<feature type="domain" description="Cadherin 10" evidence="5">
    <location>
        <begin position="1138"/>
        <end position="1242"/>
    </location>
</feature>
<feature type="domain" description="Cadherin 11" evidence="5">
    <location>
        <begin position="1243"/>
        <end position="1346"/>
    </location>
</feature>
<feature type="domain" description="Cadherin 12" evidence="5">
    <location>
        <begin position="1350"/>
        <end position="1448"/>
    </location>
</feature>
<feature type="domain" description="Cadherin 13" evidence="5">
    <location>
        <begin position="1449"/>
        <end position="1555"/>
    </location>
</feature>
<feature type="domain" description="Cadherin 14" evidence="5">
    <location>
        <begin position="1556"/>
        <end position="1660"/>
    </location>
</feature>
<feature type="domain" description="Cadherin 15" evidence="5">
    <location>
        <begin position="1661"/>
        <end position="1758"/>
    </location>
</feature>
<feature type="domain" description="Cadherin 16" evidence="5">
    <location>
        <begin position="1759"/>
        <end position="1872"/>
    </location>
</feature>
<feature type="domain" description="Cadherin 17" evidence="5">
    <location>
        <begin position="1873"/>
        <end position="1968"/>
    </location>
</feature>
<feature type="domain" description="Cadherin 18" evidence="5">
    <location>
        <begin position="1969"/>
        <end position="2070"/>
    </location>
</feature>
<feature type="domain" description="Cadherin 19" evidence="5">
    <location>
        <begin position="2071"/>
        <end position="2171"/>
    </location>
</feature>
<feature type="domain" description="Cadherin 20" evidence="5">
    <location>
        <begin position="2172"/>
        <end position="2272"/>
    </location>
</feature>
<feature type="domain" description="Cadherin 21" evidence="5">
    <location>
        <begin position="2273"/>
        <end position="2379"/>
    </location>
</feature>
<feature type="domain" description="Cadherin 22" evidence="5">
    <location>
        <begin position="2380"/>
        <end position="2481"/>
    </location>
</feature>
<feature type="domain" description="Cadherin 23" evidence="5">
    <location>
        <begin position="2482"/>
        <end position="2585"/>
    </location>
</feature>
<feature type="domain" description="Cadherin 24" evidence="5">
    <location>
        <begin position="2586"/>
        <end position="2692"/>
    </location>
</feature>
<feature type="domain" description="Cadherin 25" evidence="5">
    <location>
        <begin position="2693"/>
        <end position="2799"/>
    </location>
</feature>
<feature type="domain" description="Cadherin 26" evidence="5">
    <location>
        <begin position="2800"/>
        <end position="2908"/>
    </location>
</feature>
<feature type="domain" description="Cadherin 27" evidence="5">
    <location>
        <begin position="2909"/>
        <end position="3013"/>
    </location>
</feature>
<feature type="domain" description="Cadherin 28" evidence="5">
    <location>
        <begin position="3014"/>
        <end position="3115"/>
    </location>
</feature>
<feature type="domain" description="Cadherin 29" evidence="5">
    <location>
        <begin position="3116"/>
        <end position="3220"/>
    </location>
</feature>
<feature type="domain" description="Cadherin 30" evidence="5">
    <location>
        <begin position="3221"/>
        <end position="3323"/>
    </location>
</feature>
<feature type="domain" description="Cadherin 31" evidence="5">
    <location>
        <begin position="3324"/>
        <end position="3428"/>
    </location>
</feature>
<feature type="domain" description="Cadherin 32" evidence="5">
    <location>
        <begin position="3429"/>
        <end position="3533"/>
    </location>
</feature>
<feature type="domain" description="Cadherin 33" evidence="5">
    <location>
        <begin position="3534"/>
        <end position="3631"/>
    </location>
</feature>
<feature type="domain" description="Laminin G-like" evidence="7">
    <location>
        <begin position="3775"/>
        <end position="3946"/>
    </location>
</feature>
<feature type="domain" description="EGF-like 1" evidence="6">
    <location>
        <begin position="3949"/>
        <end position="3986"/>
    </location>
</feature>
<feature type="domain" description="EGF-like 2" evidence="6">
    <location>
        <begin position="3988"/>
        <end position="4024"/>
    </location>
</feature>
<feature type="region of interest" description="Disordered" evidence="8">
    <location>
        <begin position="4313"/>
        <end position="4340"/>
    </location>
</feature>
<feature type="glycosylation site" description="N-linked (GlcNAc...) asparagine" evidence="4">
    <location>
        <position position="39"/>
    </location>
</feature>
<feature type="glycosylation site" description="N-linked (GlcNAc...) asparagine" evidence="4">
    <location>
        <position position="210"/>
    </location>
</feature>
<feature type="glycosylation site" description="N-linked (GlcNAc...) asparagine" evidence="4">
    <location>
        <position position="280"/>
    </location>
</feature>
<feature type="glycosylation site" description="N-linked (GlcNAc...) asparagine" evidence="4">
    <location>
        <position position="330"/>
    </location>
</feature>
<feature type="glycosylation site" description="N-linked (GlcNAc...) asparagine" evidence="4">
    <location>
        <position position="459"/>
    </location>
</feature>
<feature type="glycosylation site" description="N-linked (GlcNAc...) asparagine" evidence="4">
    <location>
        <position position="568"/>
    </location>
</feature>
<feature type="glycosylation site" description="N-linked (GlcNAc...) asparagine" evidence="4">
    <location>
        <position position="627"/>
    </location>
</feature>
<feature type="glycosylation site" description="N-linked (GlcNAc...) asparagine" evidence="4">
    <location>
        <position position="789"/>
    </location>
</feature>
<feature type="glycosylation site" description="N-linked (GlcNAc...) asparagine" evidence="4">
    <location>
        <position position="996"/>
    </location>
</feature>
<feature type="glycosylation site" description="N-linked (GlcNAc...) asparagine" evidence="4">
    <location>
        <position position="1175"/>
    </location>
</feature>
<feature type="glycosylation site" description="N-linked (GlcNAc...) asparagine" evidence="4">
    <location>
        <position position="1276"/>
    </location>
</feature>
<feature type="glycosylation site" description="N-linked (GlcNAc...) asparagine" evidence="4">
    <location>
        <position position="1417"/>
    </location>
</feature>
<feature type="glycosylation site" description="N-linked (GlcNAc...) asparagine" evidence="4">
    <location>
        <position position="1899"/>
    </location>
</feature>
<feature type="glycosylation site" description="N-linked (GlcNAc...) asparagine" evidence="4">
    <location>
        <position position="1998"/>
    </location>
</feature>
<feature type="glycosylation site" description="N-linked (GlcNAc...) asparagine" evidence="4">
    <location>
        <position position="2007"/>
    </location>
</feature>
<feature type="glycosylation site" description="N-linked (GlcNAc...) asparagine" evidence="4">
    <location>
        <position position="2102"/>
    </location>
</feature>
<feature type="glycosylation site" description="N-linked (GlcNAc...) asparagine" evidence="4">
    <location>
        <position position="2165"/>
    </location>
</feature>
<feature type="glycosylation site" description="N-linked (GlcNAc...) asparagine" evidence="4">
    <location>
        <position position="2183"/>
    </location>
</feature>
<feature type="glycosylation site" description="N-linked (GlcNAc...) asparagine" evidence="4">
    <location>
        <position position="2325"/>
    </location>
</feature>
<feature type="glycosylation site" description="N-linked (GlcNAc...) asparagine" evidence="4">
    <location>
        <position position="2368"/>
    </location>
</feature>
<feature type="glycosylation site" description="N-linked (GlcNAc...) asparagine" evidence="4">
    <location>
        <position position="2387"/>
    </location>
</feature>
<feature type="glycosylation site" description="N-linked (GlcNAc...) asparagine" evidence="4">
    <location>
        <position position="2430"/>
    </location>
</feature>
<feature type="glycosylation site" description="N-linked (GlcNAc...) asparagine" evidence="4">
    <location>
        <position position="2470"/>
    </location>
</feature>
<feature type="glycosylation site" description="N-linked (GlcNAc...) asparagine" evidence="4">
    <location>
        <position position="2547"/>
    </location>
</feature>
<feature type="glycosylation site" description="N-linked (GlcNAc...) asparagine" evidence="4">
    <location>
        <position position="2597"/>
    </location>
</feature>
<feature type="glycosylation site" description="N-linked (GlcNAc...) asparagine" evidence="4">
    <location>
        <position position="3127"/>
    </location>
</feature>
<feature type="glycosylation site" description="N-linked (GlcNAc...) asparagine" evidence="4">
    <location>
        <position position="3278"/>
    </location>
</feature>
<feature type="glycosylation site" description="N-linked (GlcNAc...) asparagine" evidence="4">
    <location>
        <position position="3312"/>
    </location>
</feature>
<feature type="glycosylation site" description="N-linked (GlcNAc...) asparagine" evidence="4">
    <location>
        <position position="3432"/>
    </location>
</feature>
<feature type="glycosylation site" description="N-linked (GlcNAc...) asparagine" evidence="4">
    <location>
        <position position="3603"/>
    </location>
</feature>
<feature type="glycosylation site" description="N-linked (GlcNAc...) asparagine" evidence="4">
    <location>
        <position position="3770"/>
    </location>
</feature>
<feature type="glycosylation site" description="N-linked (GlcNAc...) asparagine" evidence="4">
    <location>
        <position position="3774"/>
    </location>
</feature>
<feature type="glycosylation site" description="N-linked (GlcNAc...) asparagine" evidence="4">
    <location>
        <position position="3815"/>
    </location>
</feature>
<feature type="glycosylation site" description="N-linked (GlcNAc...) asparagine" evidence="4">
    <location>
        <position position="3842"/>
    </location>
</feature>
<feature type="glycosylation site" description="N-linked (GlcNAc...) asparagine" evidence="4">
    <location>
        <position position="3875"/>
    </location>
</feature>
<feature type="glycosylation site" description="N-linked (GlcNAc...) asparagine" evidence="4">
    <location>
        <position position="3906"/>
    </location>
</feature>
<feature type="glycosylation site" description="N-linked (GlcNAc...) asparagine" evidence="4">
    <location>
        <position position="3991"/>
    </location>
</feature>
<feature type="disulfide bond" evidence="1">
    <location>
        <begin position="3914"/>
        <end position="3946"/>
    </location>
</feature>
<feature type="disulfide bond" evidence="1">
    <location>
        <begin position="3953"/>
        <end position="3964"/>
    </location>
</feature>
<feature type="disulfide bond" evidence="1">
    <location>
        <begin position="3958"/>
        <end position="3974"/>
    </location>
</feature>
<feature type="disulfide bond" evidence="1">
    <location>
        <begin position="3976"/>
        <end position="3985"/>
    </location>
</feature>
<feature type="disulfide bond" evidence="1">
    <location>
        <begin position="3992"/>
        <end position="4003"/>
    </location>
</feature>
<feature type="disulfide bond" evidence="1">
    <location>
        <begin position="3997"/>
        <end position="4012"/>
    </location>
</feature>
<feature type="disulfide bond" evidence="1">
    <location>
        <begin position="4014"/>
        <end position="4023"/>
    </location>
</feature>
<feature type="sequence conflict" description="In Ref. 4; BAE21217." evidence="9" ref="4">
    <original>T</original>
    <variation>N</variation>
    <location>
        <position position="4010"/>
    </location>
</feature>
<protein>
    <recommendedName>
        <fullName>Protocadherin Fat 2</fullName>
    </recommendedName>
    <alternativeName>
        <fullName>FAT tumor suppressor homolog 2</fullName>
    </alternativeName>
</protein>